<feature type="chain" id="PRO_0000062328" description="Large ribosomal subunit protein uL16m">
    <location>
        <begin position="1"/>
        <end position="135"/>
    </location>
</feature>
<protein>
    <recommendedName>
        <fullName evidence="1">Large ribosomal subunit protein uL16m</fullName>
    </recommendedName>
    <alternativeName>
        <fullName>60S ribosomal protein L16, mitochondrial</fullName>
    </alternativeName>
</protein>
<reference key="1">
    <citation type="journal article" date="1994" name="J. Mol. Biol.">
        <title>Complete sequence of the mitochondrial DNA of the chlorophyte alga Prototheca wickerhamii. Gene content and genome organization.</title>
        <authorList>
            <person name="Wolff G."/>
            <person name="Plante I."/>
            <person name="Lang B.F."/>
            <person name="Kueck U."/>
            <person name="Burger G."/>
        </authorList>
    </citation>
    <scope>NUCLEOTIDE SEQUENCE [GENOMIC DNA]</scope>
    <source>
        <strain>263-11</strain>
    </source>
</reference>
<name>RM16_PROWI</name>
<organism>
    <name type="scientific">Prototheca wickerhamii</name>
    <dbReference type="NCBI Taxonomy" id="3111"/>
    <lineage>
        <taxon>Eukaryota</taxon>
        <taxon>Viridiplantae</taxon>
        <taxon>Chlorophyta</taxon>
        <taxon>core chlorophytes</taxon>
        <taxon>Trebouxiophyceae</taxon>
        <taxon>Chlorellales</taxon>
        <taxon>Chlorellaceae</taxon>
        <taxon>Prototheca</taxon>
    </lineage>
</organism>
<comment type="subcellular location">
    <subcellularLocation>
        <location>Mitochondrion</location>
    </subcellularLocation>
</comment>
<comment type="similarity">
    <text evidence="1">Belongs to the universal ribosomal protein uL16 family.</text>
</comment>
<gene>
    <name type="primary">RPL16</name>
</gene>
<evidence type="ECO:0000305" key="1"/>
<sequence length="135" mass="15311">MLQPNNTKFRKFQKSRVKGVQSNTDQLRYGKFGIKTVSAARIPARTIEAVRRVITRKFKRLGVIWIRVFPDIAVSGKPAEVRMGKGKGAPQYWVCKVKRGAILFEFDGISPQLAKQAARLADSKLPIKTRFVMYS</sequence>
<accession>P46751</accession>
<dbReference type="EMBL" id="U02970">
    <property type="protein sequence ID" value="AAD12638.1"/>
    <property type="molecule type" value="Genomic_DNA"/>
</dbReference>
<dbReference type="PIR" id="T11919">
    <property type="entry name" value="T11919"/>
</dbReference>
<dbReference type="RefSeq" id="NP_042250.1">
    <property type="nucleotide sequence ID" value="NC_001613.1"/>
</dbReference>
<dbReference type="SMR" id="P46751"/>
<dbReference type="GeneID" id="802124"/>
<dbReference type="GO" id="GO:0005762">
    <property type="term" value="C:mitochondrial large ribosomal subunit"/>
    <property type="evidence" value="ECO:0007669"/>
    <property type="project" value="TreeGrafter"/>
</dbReference>
<dbReference type="GO" id="GO:0019843">
    <property type="term" value="F:rRNA binding"/>
    <property type="evidence" value="ECO:0007669"/>
    <property type="project" value="InterPro"/>
</dbReference>
<dbReference type="GO" id="GO:0003735">
    <property type="term" value="F:structural constituent of ribosome"/>
    <property type="evidence" value="ECO:0007669"/>
    <property type="project" value="InterPro"/>
</dbReference>
<dbReference type="GO" id="GO:0032543">
    <property type="term" value="P:mitochondrial translation"/>
    <property type="evidence" value="ECO:0007669"/>
    <property type="project" value="TreeGrafter"/>
</dbReference>
<dbReference type="CDD" id="cd01433">
    <property type="entry name" value="Ribosomal_L16_L10e"/>
    <property type="match status" value="1"/>
</dbReference>
<dbReference type="FunFam" id="3.90.1170.10:FF:000001">
    <property type="entry name" value="50S ribosomal protein L16"/>
    <property type="match status" value="1"/>
</dbReference>
<dbReference type="Gene3D" id="3.90.1170.10">
    <property type="entry name" value="Ribosomal protein L10e/L16"/>
    <property type="match status" value="1"/>
</dbReference>
<dbReference type="HAMAP" id="MF_01342">
    <property type="entry name" value="Ribosomal_uL16"/>
    <property type="match status" value="1"/>
</dbReference>
<dbReference type="InterPro" id="IPR047873">
    <property type="entry name" value="Ribosomal_uL16"/>
</dbReference>
<dbReference type="InterPro" id="IPR000114">
    <property type="entry name" value="Ribosomal_uL16_bact-type"/>
</dbReference>
<dbReference type="InterPro" id="IPR020798">
    <property type="entry name" value="Ribosomal_uL16_CS"/>
</dbReference>
<dbReference type="InterPro" id="IPR016180">
    <property type="entry name" value="Ribosomal_uL16_dom"/>
</dbReference>
<dbReference type="InterPro" id="IPR036920">
    <property type="entry name" value="Ribosomal_uL16_sf"/>
</dbReference>
<dbReference type="NCBIfam" id="TIGR01164">
    <property type="entry name" value="rplP_bact"/>
    <property type="match status" value="1"/>
</dbReference>
<dbReference type="PANTHER" id="PTHR12220">
    <property type="entry name" value="50S/60S RIBOSOMAL PROTEIN L16"/>
    <property type="match status" value="1"/>
</dbReference>
<dbReference type="PANTHER" id="PTHR12220:SF24">
    <property type="entry name" value="LARGE RIBOSOMAL SUBUNIT PROTEIN UL16M"/>
    <property type="match status" value="1"/>
</dbReference>
<dbReference type="Pfam" id="PF00252">
    <property type="entry name" value="Ribosomal_L16"/>
    <property type="match status" value="1"/>
</dbReference>
<dbReference type="PRINTS" id="PR00060">
    <property type="entry name" value="RIBOSOMALL16"/>
</dbReference>
<dbReference type="SUPFAM" id="SSF54686">
    <property type="entry name" value="Ribosomal protein L16p/L10e"/>
    <property type="match status" value="1"/>
</dbReference>
<dbReference type="PROSITE" id="PS00586">
    <property type="entry name" value="RIBOSOMAL_L16_1"/>
    <property type="match status" value="1"/>
</dbReference>
<dbReference type="PROSITE" id="PS00701">
    <property type="entry name" value="RIBOSOMAL_L16_2"/>
    <property type="match status" value="1"/>
</dbReference>
<geneLocation type="mitochondrion"/>
<proteinExistence type="inferred from homology"/>
<keyword id="KW-0496">Mitochondrion</keyword>
<keyword id="KW-0687">Ribonucleoprotein</keyword>
<keyword id="KW-0689">Ribosomal protein</keyword>